<sequence length="130" mass="14095">MSGRGKQGGKARAKAKSRSSRAGLQFPVGRVHRLLRKGNYAERVGAGAPVYMAAVLEYLTAEILELAGNAARDNKKTRIIPRHLQLAIRNDEELNKLLGKVTIAQGGVLPNIQAVLLPKKTESHHKAKGK</sequence>
<evidence type="ECO:0000250" key="1"/>
<evidence type="ECO:0000250" key="2">
    <source>
        <dbReference type="UniProtKB" id="C0HKE1"/>
    </source>
</evidence>
<evidence type="ECO:0000250" key="3">
    <source>
        <dbReference type="UniProtKB" id="P0C0S5"/>
    </source>
</evidence>
<evidence type="ECO:0000250" key="4">
    <source>
        <dbReference type="UniProtKB" id="P0C0S8"/>
    </source>
</evidence>
<evidence type="ECO:0000250" key="5">
    <source>
        <dbReference type="UniProtKB" id="P22752"/>
    </source>
</evidence>
<evidence type="ECO:0000250" key="6">
    <source>
        <dbReference type="UniProtKB" id="Q6FI13"/>
    </source>
</evidence>
<evidence type="ECO:0000250" key="7">
    <source>
        <dbReference type="UniProtKB" id="Q6GSS7"/>
    </source>
</evidence>
<evidence type="ECO:0000256" key="8">
    <source>
        <dbReference type="SAM" id="MobiDB-lite"/>
    </source>
</evidence>
<evidence type="ECO:0000269" key="9">
    <source>
    </source>
</evidence>
<evidence type="ECO:0000305" key="10"/>
<evidence type="ECO:0000312" key="11">
    <source>
        <dbReference type="RGD" id="1307165"/>
    </source>
</evidence>
<proteinExistence type="evidence at protein level"/>
<accession>P0CC09</accession>
<reference key="1">
    <citation type="journal article" date="2004" name="Nature">
        <title>Genome sequence of the Brown Norway rat yields insights into mammalian evolution.</title>
        <authorList>
            <person name="Gibbs R.A."/>
            <person name="Weinstock G.M."/>
            <person name="Metzker M.L."/>
            <person name="Muzny D.M."/>
            <person name="Sodergren E.J."/>
            <person name="Scherer S."/>
            <person name="Scott G."/>
            <person name="Steffen D."/>
            <person name="Worley K.C."/>
            <person name="Burch P.E."/>
            <person name="Okwuonu G."/>
            <person name="Hines S."/>
            <person name="Lewis L."/>
            <person name="Deramo C."/>
            <person name="Delgado O."/>
            <person name="Dugan-Rocha S."/>
            <person name="Miner G."/>
            <person name="Morgan M."/>
            <person name="Hawes A."/>
            <person name="Gill R."/>
            <person name="Holt R.A."/>
            <person name="Adams M.D."/>
            <person name="Amanatides P.G."/>
            <person name="Baden-Tillson H."/>
            <person name="Barnstead M."/>
            <person name="Chin S."/>
            <person name="Evans C.A."/>
            <person name="Ferriera S."/>
            <person name="Fosler C."/>
            <person name="Glodek A."/>
            <person name="Gu Z."/>
            <person name="Jennings D."/>
            <person name="Kraft C.L."/>
            <person name="Nguyen T."/>
            <person name="Pfannkoch C.M."/>
            <person name="Sitter C."/>
            <person name="Sutton G.G."/>
            <person name="Venter J.C."/>
            <person name="Woodage T."/>
            <person name="Smith D."/>
            <person name="Lee H.-M."/>
            <person name="Gustafson E."/>
            <person name="Cahill P."/>
            <person name="Kana A."/>
            <person name="Doucette-Stamm L."/>
            <person name="Weinstock K."/>
            <person name="Fechtel K."/>
            <person name="Weiss R.B."/>
            <person name="Dunn D.M."/>
            <person name="Green E.D."/>
            <person name="Blakesley R.W."/>
            <person name="Bouffard G.G."/>
            <person name="De Jong P.J."/>
            <person name="Osoegawa K."/>
            <person name="Zhu B."/>
            <person name="Marra M."/>
            <person name="Schein J."/>
            <person name="Bosdet I."/>
            <person name="Fjell C."/>
            <person name="Jones S."/>
            <person name="Krzywinski M."/>
            <person name="Mathewson C."/>
            <person name="Siddiqui A."/>
            <person name="Wye N."/>
            <person name="McPherson J."/>
            <person name="Zhao S."/>
            <person name="Fraser C.M."/>
            <person name="Shetty J."/>
            <person name="Shatsman S."/>
            <person name="Geer K."/>
            <person name="Chen Y."/>
            <person name="Abramzon S."/>
            <person name="Nierman W.C."/>
            <person name="Havlak P.H."/>
            <person name="Chen R."/>
            <person name="Durbin K.J."/>
            <person name="Egan A."/>
            <person name="Ren Y."/>
            <person name="Song X.-Z."/>
            <person name="Li B."/>
            <person name="Liu Y."/>
            <person name="Qin X."/>
            <person name="Cawley S."/>
            <person name="Cooney A.J."/>
            <person name="D'Souza L.M."/>
            <person name="Martin K."/>
            <person name="Wu J.Q."/>
            <person name="Gonzalez-Garay M.L."/>
            <person name="Jackson A.R."/>
            <person name="Kalafus K.J."/>
            <person name="McLeod M.P."/>
            <person name="Milosavljevic A."/>
            <person name="Virk D."/>
            <person name="Volkov A."/>
            <person name="Wheeler D.A."/>
            <person name="Zhang Z."/>
            <person name="Bailey J.A."/>
            <person name="Eichler E.E."/>
            <person name="Tuzun E."/>
            <person name="Birney E."/>
            <person name="Mongin E."/>
            <person name="Ureta-Vidal A."/>
            <person name="Woodwark C."/>
            <person name="Zdobnov E."/>
            <person name="Bork P."/>
            <person name="Suyama M."/>
            <person name="Torrents D."/>
            <person name="Alexandersson M."/>
            <person name="Trask B.J."/>
            <person name="Young J.M."/>
            <person name="Huang H."/>
            <person name="Wang H."/>
            <person name="Xing H."/>
            <person name="Daniels S."/>
            <person name="Gietzen D."/>
            <person name="Schmidt J."/>
            <person name="Stevens K."/>
            <person name="Vitt U."/>
            <person name="Wingrove J."/>
            <person name="Camara F."/>
            <person name="Mar Alba M."/>
            <person name="Abril J.F."/>
            <person name="Guigo R."/>
            <person name="Smit A."/>
            <person name="Dubchak I."/>
            <person name="Rubin E.M."/>
            <person name="Couronne O."/>
            <person name="Poliakov A."/>
            <person name="Huebner N."/>
            <person name="Ganten D."/>
            <person name="Goesele C."/>
            <person name="Hummel O."/>
            <person name="Kreitler T."/>
            <person name="Lee Y.-A."/>
            <person name="Monti J."/>
            <person name="Schulz H."/>
            <person name="Zimdahl H."/>
            <person name="Himmelbauer H."/>
            <person name="Lehrach H."/>
            <person name="Jacob H.J."/>
            <person name="Bromberg S."/>
            <person name="Gullings-Handley J."/>
            <person name="Jensen-Seaman M.I."/>
            <person name="Kwitek A.E."/>
            <person name="Lazar J."/>
            <person name="Pasko D."/>
            <person name="Tonellato P.J."/>
            <person name="Twigger S."/>
            <person name="Ponting C.P."/>
            <person name="Duarte J.M."/>
            <person name="Rice S."/>
            <person name="Goodstadt L."/>
            <person name="Beatson S.A."/>
            <person name="Emes R.D."/>
            <person name="Winter E.E."/>
            <person name="Webber C."/>
            <person name="Brandt P."/>
            <person name="Nyakatura G."/>
            <person name="Adetobi M."/>
            <person name="Chiaromonte F."/>
            <person name="Elnitski L."/>
            <person name="Eswara P."/>
            <person name="Hardison R.C."/>
            <person name="Hou M."/>
            <person name="Kolbe D."/>
            <person name="Makova K."/>
            <person name="Miller W."/>
            <person name="Nekrutenko A."/>
            <person name="Riemer C."/>
            <person name="Schwartz S."/>
            <person name="Taylor J."/>
            <person name="Yang S."/>
            <person name="Zhang Y."/>
            <person name="Lindpaintner K."/>
            <person name="Andrews T.D."/>
            <person name="Caccamo M."/>
            <person name="Clamp M."/>
            <person name="Clarke L."/>
            <person name="Curwen V."/>
            <person name="Durbin R.M."/>
            <person name="Eyras E."/>
            <person name="Searle S.M."/>
            <person name="Cooper G.M."/>
            <person name="Batzoglou S."/>
            <person name="Brudno M."/>
            <person name="Sidow A."/>
            <person name="Stone E.A."/>
            <person name="Payseur B.A."/>
            <person name="Bourque G."/>
            <person name="Lopez-Otin C."/>
            <person name="Puente X.S."/>
            <person name="Chakrabarti K."/>
            <person name="Chatterji S."/>
            <person name="Dewey C."/>
            <person name="Pachter L."/>
            <person name="Bray N."/>
            <person name="Yap V.B."/>
            <person name="Caspi A."/>
            <person name="Tesler G."/>
            <person name="Pevzner P.A."/>
            <person name="Haussler D."/>
            <person name="Roskin K.M."/>
            <person name="Baertsch R."/>
            <person name="Clawson H."/>
            <person name="Furey T.S."/>
            <person name="Hinrichs A.S."/>
            <person name="Karolchik D."/>
            <person name="Kent W.J."/>
            <person name="Rosenbloom K.R."/>
            <person name="Trumbower H."/>
            <person name="Weirauch M."/>
            <person name="Cooper D.N."/>
            <person name="Stenson P.D."/>
            <person name="Ma B."/>
            <person name="Brent M."/>
            <person name="Arumugam M."/>
            <person name="Shteynberg D."/>
            <person name="Copley R.R."/>
            <person name="Taylor M.S."/>
            <person name="Riethman H."/>
            <person name="Mudunuri U."/>
            <person name="Peterson J."/>
            <person name="Guyer M."/>
            <person name="Felsenfeld A."/>
            <person name="Old S."/>
            <person name="Mockrin S."/>
            <person name="Collins F.S."/>
        </authorList>
    </citation>
    <scope>NUCLEOTIDE SEQUENCE [LARGE SCALE GENOMIC DNA]</scope>
    <source>
        <strain>Brown Norway</strain>
    </source>
</reference>
<reference key="2">
    <citation type="journal article" date="2009" name="Proteomics">
        <title>Mass spectrometry-compatible silver staining of histones resolved on acetic acid-urea-Triton PAGE.</title>
        <authorList>
            <person name="Pramod K.S."/>
            <person name="Bharat K."/>
            <person name="Sanjay G."/>
        </authorList>
    </citation>
    <scope>IDENTIFICATION BY MASS SPECTROMETRY</scope>
</reference>
<reference key="3">
    <citation type="journal article" date="2011" name="Exp. Biol. Med.">
        <title>Overexpression of histone variant H2A.1 and cellular transformation are related in N-nitrosodiethylamine-induced sequential hepatocarcinogenesis.</title>
        <authorList>
            <person name="Khare S.P."/>
            <person name="Sharma A."/>
            <person name="Deodhar K.K."/>
            <person name="Gupta S."/>
        </authorList>
    </citation>
    <scope>INDUCTION BY NDEA</scope>
    <scope>IDENTIFICATION BY MASS SPECTROMETRY</scope>
</reference>
<feature type="initiator methionine" description="Removed" evidence="6">
    <location>
        <position position="1"/>
    </location>
</feature>
<feature type="chain" id="PRO_0000390388" description="Histone H2A type 2-A">
    <location>
        <begin position="2"/>
        <end position="130"/>
    </location>
</feature>
<feature type="region of interest" description="Disordered" evidence="8">
    <location>
        <begin position="1"/>
        <end position="22"/>
    </location>
</feature>
<feature type="compositionally biased region" description="Basic residues" evidence="8">
    <location>
        <begin position="7"/>
        <end position="19"/>
    </location>
</feature>
<feature type="modified residue" description="N-acetylserine" evidence="6">
    <location>
        <position position="2"/>
    </location>
</feature>
<feature type="modified residue" description="Phosphoserine; by RPS6KA5" evidence="6">
    <location>
        <position position="2"/>
    </location>
</feature>
<feature type="modified residue" description="Citrulline; alternate" evidence="4">
    <location>
        <position position="4"/>
    </location>
</feature>
<feature type="modified residue" description="Symmetric dimethylarginine; by PRMT5; alternate" evidence="7">
    <location>
        <position position="4"/>
    </location>
</feature>
<feature type="modified residue" description="N6-(2-hydroxyisobutyryl)lysine; alternate" evidence="4">
    <location>
        <position position="6"/>
    </location>
</feature>
<feature type="modified residue" description="N6-acetyllysine; alternate" evidence="6">
    <location>
        <position position="6"/>
    </location>
</feature>
<feature type="modified residue" description="N6-(2-hydroxyisobutyryl)lysine; alternate" evidence="4">
    <location>
        <position position="10"/>
    </location>
</feature>
<feature type="modified residue" description="N6-lactoyllysine; alternate" evidence="3">
    <location>
        <position position="10"/>
    </location>
</feature>
<feature type="modified residue" description="N6-succinyllysine; alternate" evidence="6">
    <location>
        <position position="10"/>
    </location>
</feature>
<feature type="modified residue" description="N6-(2-hydroxyisobutyryl)lysine; alternate" evidence="4">
    <location>
        <position position="37"/>
    </location>
</feature>
<feature type="modified residue" description="N6-(beta-hydroxybutyryl)lysine; alternate" evidence="2">
    <location>
        <position position="37"/>
    </location>
</feature>
<feature type="modified residue" description="N6-crotonyllysine; alternate" evidence="4">
    <location>
        <position position="37"/>
    </location>
</feature>
<feature type="modified residue" description="N6-(2-hydroxyisobutyryl)lysine" evidence="4">
    <location>
        <position position="75"/>
    </location>
</feature>
<feature type="modified residue" description="N6-(2-hydroxyisobutyryl)lysine" evidence="4">
    <location>
        <position position="76"/>
    </location>
</feature>
<feature type="modified residue" description="N6-(2-hydroxyisobutyryl)lysine; alternate" evidence="4">
    <location>
        <position position="96"/>
    </location>
</feature>
<feature type="modified residue" description="N6-glutaryllysine; alternate" evidence="4">
    <location>
        <position position="96"/>
    </location>
</feature>
<feature type="modified residue" description="N6-succinyllysine; alternate" evidence="6">
    <location>
        <position position="96"/>
    </location>
</feature>
<feature type="modified residue" description="N6-glutaryllysine" evidence="4">
    <location>
        <position position="100"/>
    </location>
</feature>
<feature type="modified residue" description="N5-methylglutamine" evidence="4">
    <location>
        <position position="105"/>
    </location>
</feature>
<feature type="modified residue" description="N6-(2-hydroxyisobutyryl)lysine; alternate" evidence="4">
    <location>
        <position position="119"/>
    </location>
</feature>
<feature type="modified residue" description="N6-crotonyllysine; alternate" evidence="4">
    <location>
        <position position="119"/>
    </location>
</feature>
<feature type="modified residue" description="N6-glutaryllysine; alternate" evidence="4">
    <location>
        <position position="119"/>
    </location>
</feature>
<feature type="modified residue" description="N6-crotonyllysine; alternate" evidence="4">
    <location>
        <position position="120"/>
    </location>
</feature>
<feature type="modified residue" description="N6-glutaryllysine; alternate" evidence="4">
    <location>
        <position position="120"/>
    </location>
</feature>
<feature type="modified residue" description="Phosphothreonine; by DCAF1" evidence="6">
    <location>
        <position position="121"/>
    </location>
</feature>
<feature type="modified residue" description="N6-crotonyllysine; alternate" evidence="4">
    <location>
        <position position="126"/>
    </location>
</feature>
<feature type="modified residue" description="N6-glutaryllysine; alternate" evidence="4">
    <location>
        <position position="126"/>
    </location>
</feature>
<feature type="cross-link" description="Glycyl lysine isopeptide (Lys-Gly) (interchain with G-Cter in ubiquitin)" evidence="6">
    <location>
        <position position="14"/>
    </location>
</feature>
<feature type="cross-link" description="Glycyl lysine isopeptide (Lys-Gly) (interchain with G-Cter in ubiquitin)" evidence="6">
    <location>
        <position position="16"/>
    </location>
</feature>
<feature type="cross-link" description="Glycyl lysine isopeptide (Lys-Gly) (interchain with G-Cter in ubiquitin); alternate" evidence="6">
    <location>
        <position position="120"/>
    </location>
</feature>
<protein>
    <recommendedName>
        <fullName>Histone H2A type 2-A</fullName>
    </recommendedName>
    <alternativeName>
        <fullName evidence="6">H2A-clustered histone 18</fullName>
    </alternativeName>
    <alternativeName>
        <fullName>Histone H2A.2</fullName>
    </alternativeName>
</protein>
<comment type="function">
    <text evidence="1">Core component of nucleosome. Nucleosomes wrap and compact DNA into chromatin, limiting DNA accessibility to the cellular machineries which require DNA as a template. Histones thereby play a central role in transcription regulation, DNA repair, DNA replication and chromosomal stability. DNA accessibility is regulated via a complex set of post-translational modifications of histones, also called histone code, and nucleosome remodeling (By similarity).</text>
</comment>
<comment type="subunit">
    <text evidence="1">The nucleosome is a histone octamer containing two molecules each of H2A, H2B, H3 and H4 assembled in one H3-H4 heterotetramer and two H2A-H2B heterodimers. The octamer wraps approximately 147 bp of DNA (By similarity).</text>
</comment>
<comment type="subcellular location">
    <subcellularLocation>
        <location evidence="1">Nucleus</location>
    </subcellularLocation>
    <subcellularLocation>
        <location evidence="1">Chromosome</location>
    </subcellularLocation>
</comment>
<comment type="induction">
    <text evidence="9">Down-regulated in hepatocytes after treatment with the procarcinogen N-nitrosodiethylamine (NDEA).</text>
</comment>
<comment type="PTM">
    <text evidence="4">Deiminated on Arg-4 in granulocytes upon calcium entry.</text>
</comment>
<comment type="PTM">
    <text evidence="4">Monoubiquitination of Lys-120 (H2AK119Ub) by RING1, TRIM37 and RNF2/RING2 complex gives a specific tag for epigenetic transcriptional repression and participates in X chromosome inactivation of female mammals. It is involved in the initiation of both imprinted and random X inactivation. Ubiquitinated H2A is enriched in inactive X chromosome chromatin. Ubiquitination of H2A functions downstream of methylation of 'Lys-27' of histone H3 (H3K27me). H2AK119Ub by RNF2/RING2 can also be induced by ultraviolet and may be involved in DNA repair. Following DNA double-strand breaks (DSBs), it is ubiquitinated through 'Lys-63' linkage of ubiquitin moieties by the E2 ligase UBE2N and the E3 ligases RNF8 and RNF168, leading to the recruitment of repair proteins to sites of DNA damage. Ubiquitination at Lys-14 and Lys-16 (H2AK13Ub and H2AK15Ub, respectively) in response to DNA damage is initiated by RNF168 that mediates monoubiquitination at these 2 sites, and 'Lys-63'-linked ubiquitin are then conjugated to monoubiquitin; RNF8 is able to extend 'Lys-63'-linked ubiquitin chains in vitro. H2AK119Ub and ionizing radiation-induced 'Lys-63'-linked ubiquitination (H2AK13Ub and H2AK15Ub) are distinct events.</text>
</comment>
<comment type="PTM">
    <text evidence="4">Phosphorylation on Ser-2 (H2AS1ph) is enhanced during mitosis. Phosphorylation on Ser-2 by RPS6KA5/MSK1 directly represses transcription. Acetylation of H3 inhibits Ser-2 phosphorylation by RPS6KA5/MSK1. Phosphorylation at Thr-121 (H2AT120ph) by DCAF1 is present in the regulatory region of many tumor suppresor genes and down-regulates their transcription.</text>
</comment>
<comment type="PTM">
    <text evidence="5">Symmetric dimethylation on Arg-4 by the PRDM1/PRMT5 complex may play a crucial role in the germ-cell lineage.</text>
</comment>
<comment type="PTM">
    <text evidence="4">Glutamine methylation at Gln-105 (H2AQ104me) by FBL is specifically dedicated to polymerase I. It is present at 35S ribosomal DNA locus and impairs binding of the FACT complex.</text>
</comment>
<comment type="PTM">
    <text evidence="4">Crotonylation (Kcr) is specifically present in male germ cells and marks testis-specific genes in post-meiotic cells, including X-linked genes that escape sex chromosome inactivation in haploid cells. Crotonylation marks active promoters and enhancers and confers resistance to transcriptional repressors. It is also associated with post-meiotically activated genes on autosomes.</text>
</comment>
<comment type="PTM">
    <text evidence="3">Lactylated in macrophages by EP300/P300 by using lactoyl-CoA directly derived from endogenous or exogenous lactate, leading to stimulates gene transcription.</text>
</comment>
<comment type="similarity">
    <text evidence="10">Belongs to the histone H2A family.</text>
</comment>
<name>H2A2A_RAT</name>
<keyword id="KW-0007">Acetylation</keyword>
<keyword id="KW-0158">Chromosome</keyword>
<keyword id="KW-0164">Citrullination</keyword>
<keyword id="KW-0238">DNA-binding</keyword>
<keyword id="KW-0379">Hydroxylation</keyword>
<keyword id="KW-1017">Isopeptide bond</keyword>
<keyword id="KW-0488">Methylation</keyword>
<keyword id="KW-0544">Nucleosome core</keyword>
<keyword id="KW-0539">Nucleus</keyword>
<keyword id="KW-0597">Phosphoprotein</keyword>
<keyword id="KW-1185">Reference proteome</keyword>
<keyword id="KW-0832">Ubl conjugation</keyword>
<gene>
    <name evidence="6" type="primary">H2ac18</name>
    <name evidence="11" type="synonym">Hist2h2aa3</name>
</gene>
<dbReference type="EMBL" id="AABR03012720">
    <property type="status" value="NOT_ANNOTATED_CDS"/>
    <property type="molecule type" value="Genomic_DNA"/>
</dbReference>
<dbReference type="RefSeq" id="NP_001302422.1">
    <property type="nucleotide sequence ID" value="NM_001315493.3"/>
</dbReference>
<dbReference type="RefSeq" id="XP_002726073.1">
    <property type="nucleotide sequence ID" value="XM_002726027.5"/>
</dbReference>
<dbReference type="RefSeq" id="XP_003749398.1">
    <property type="nucleotide sequence ID" value="XM_003749350.4"/>
</dbReference>
<dbReference type="SMR" id="P0CC09"/>
<dbReference type="BioGRID" id="265604">
    <property type="interactions" value="1"/>
</dbReference>
<dbReference type="FunCoup" id="P0CC09">
    <property type="interactions" value="1156"/>
</dbReference>
<dbReference type="STRING" id="10116.ENSRNOP00000039333"/>
<dbReference type="iPTMnet" id="P0CC09"/>
<dbReference type="PhosphoSitePlus" id="P0CC09"/>
<dbReference type="jPOST" id="P0CC09"/>
<dbReference type="PaxDb" id="10116-ENSRNOP00000039333"/>
<dbReference type="GeneID" id="365877"/>
<dbReference type="KEGG" id="rno:365877"/>
<dbReference type="UCSC" id="RGD:1307165">
    <property type="organism name" value="rat"/>
</dbReference>
<dbReference type="AGR" id="RGD:1307165"/>
<dbReference type="AGR" id="RGD:1584037"/>
<dbReference type="CTD" id="8337"/>
<dbReference type="RGD" id="1307165">
    <property type="gene designation" value="Hist2h2aa3"/>
</dbReference>
<dbReference type="VEuPathDB" id="HostDB:ENSRNOG00000068602"/>
<dbReference type="eggNOG" id="KOG1756">
    <property type="taxonomic scope" value="Eukaryota"/>
</dbReference>
<dbReference type="HOGENOM" id="CLU_062828_3_1_1"/>
<dbReference type="InParanoid" id="P0CC09"/>
<dbReference type="OrthoDB" id="9608857at2759"/>
<dbReference type="PhylomeDB" id="P0CC09"/>
<dbReference type="TreeFam" id="TF300137"/>
<dbReference type="Reactome" id="R-RNO-110330">
    <property type="pathway name" value="Recognition and association of DNA glycosylase with site containing an affected purine"/>
</dbReference>
<dbReference type="Reactome" id="R-RNO-110331">
    <property type="pathway name" value="Cleavage of the damaged purine"/>
</dbReference>
<dbReference type="Reactome" id="R-RNO-212300">
    <property type="pathway name" value="PRC2 methylates histones and DNA"/>
</dbReference>
<dbReference type="Reactome" id="R-RNO-2299718">
    <property type="pathway name" value="Condensation of Prophase Chromosomes"/>
</dbReference>
<dbReference type="Reactome" id="R-RNO-2559580">
    <property type="pathway name" value="Oxidative Stress Induced Senescence"/>
</dbReference>
<dbReference type="Reactome" id="R-RNO-2559582">
    <property type="pathway name" value="Senescence-Associated Secretory Phenotype (SASP)"/>
</dbReference>
<dbReference type="Reactome" id="R-RNO-2559586">
    <property type="pathway name" value="DNA Damage/Telomere Stress Induced Senescence"/>
</dbReference>
<dbReference type="Reactome" id="R-RNO-3214858">
    <property type="pathway name" value="RMTs methylate histone arginines"/>
</dbReference>
<dbReference type="Reactome" id="R-RNO-427359">
    <property type="pathway name" value="SIRT1 negatively regulates rRNA expression"/>
</dbReference>
<dbReference type="Reactome" id="R-RNO-427413">
    <property type="pathway name" value="NoRC negatively regulates rRNA expression"/>
</dbReference>
<dbReference type="Reactome" id="R-RNO-5250924">
    <property type="pathway name" value="B-WICH complex positively regulates rRNA expression"/>
</dbReference>
<dbReference type="Reactome" id="R-RNO-5578749">
    <property type="pathway name" value="Transcriptional regulation by small RNAs"/>
</dbReference>
<dbReference type="Reactome" id="R-RNO-5625886">
    <property type="pathway name" value="Activated PKN1 stimulates transcription of AR (androgen receptor) regulated genes KLK2 and KLK3"/>
</dbReference>
<dbReference type="Reactome" id="R-RNO-5689603">
    <property type="pathway name" value="UCH proteinases"/>
</dbReference>
<dbReference type="Reactome" id="R-RNO-5689880">
    <property type="pathway name" value="Ub-specific processing proteases"/>
</dbReference>
<dbReference type="Reactome" id="R-RNO-5689901">
    <property type="pathway name" value="Metalloprotease DUBs"/>
</dbReference>
<dbReference type="Reactome" id="R-RNO-606279">
    <property type="pathway name" value="Deposition of new CENPA-containing nucleosomes at the centromere"/>
</dbReference>
<dbReference type="Reactome" id="R-RNO-68616">
    <property type="pathway name" value="Assembly of the ORC complex at the origin of replication"/>
</dbReference>
<dbReference type="Reactome" id="R-RNO-73728">
    <property type="pathway name" value="RNA Polymerase I Promoter Opening"/>
</dbReference>
<dbReference type="Reactome" id="R-RNO-73772">
    <property type="pathway name" value="RNA Polymerase I Promoter Escape"/>
</dbReference>
<dbReference type="Reactome" id="R-RNO-8936459">
    <property type="pathway name" value="RUNX1 regulates genes involved in megakaryocyte differentiation and platelet function"/>
</dbReference>
<dbReference type="Reactome" id="R-RNO-9018519">
    <property type="pathway name" value="Estrogen-dependent gene expression"/>
</dbReference>
<dbReference type="Reactome" id="R-RNO-9841922">
    <property type="pathway name" value="MLL4 and MLL3 complexes regulate expression of PPARG target genes in adipogenesis and hepatic steatosis"/>
</dbReference>
<dbReference type="Reactome" id="R-RNO-9843940">
    <property type="pathway name" value="Regulation of endogenous retroelements by KRAB-ZFP proteins"/>
</dbReference>
<dbReference type="Reactome" id="R-RNO-9843970">
    <property type="pathway name" value="Regulation of endogenous retroelements by the Human Silencing Hub (HUSH) complex"/>
</dbReference>
<dbReference type="PRO" id="PR:P0CC09"/>
<dbReference type="Proteomes" id="UP000002494">
    <property type="component" value="Chromosome 17"/>
</dbReference>
<dbReference type="Bgee" id="ENSRNOG00000047898">
    <property type="expression patterns" value="Expressed in ovary and 14 other cell types or tissues"/>
</dbReference>
<dbReference type="ExpressionAtlas" id="P0CC09">
    <property type="expression patterns" value="baseline"/>
</dbReference>
<dbReference type="GO" id="GO:0000786">
    <property type="term" value="C:nucleosome"/>
    <property type="evidence" value="ECO:0000318"/>
    <property type="project" value="GO_Central"/>
</dbReference>
<dbReference type="GO" id="GO:0005634">
    <property type="term" value="C:nucleus"/>
    <property type="evidence" value="ECO:0000266"/>
    <property type="project" value="RGD"/>
</dbReference>
<dbReference type="GO" id="GO:0003677">
    <property type="term" value="F:DNA binding"/>
    <property type="evidence" value="ECO:0007669"/>
    <property type="project" value="UniProtKB-KW"/>
</dbReference>
<dbReference type="GO" id="GO:0046982">
    <property type="term" value="F:protein heterodimerization activity"/>
    <property type="evidence" value="ECO:0007669"/>
    <property type="project" value="InterPro"/>
</dbReference>
<dbReference type="GO" id="GO:0030527">
    <property type="term" value="F:structural constituent of chromatin"/>
    <property type="evidence" value="ECO:0000318"/>
    <property type="project" value="GO_Central"/>
</dbReference>
<dbReference type="GO" id="GO:0031507">
    <property type="term" value="P:heterochromatin formation"/>
    <property type="evidence" value="ECO:0000318"/>
    <property type="project" value="GO_Central"/>
</dbReference>
<dbReference type="CDD" id="cd00074">
    <property type="entry name" value="HFD_H2A"/>
    <property type="match status" value="1"/>
</dbReference>
<dbReference type="FunFam" id="1.10.20.10:FF:000103">
    <property type="entry name" value="Histone H2A type 1"/>
    <property type="match status" value="1"/>
</dbReference>
<dbReference type="Gene3D" id="1.10.20.10">
    <property type="entry name" value="Histone, subunit A"/>
    <property type="match status" value="1"/>
</dbReference>
<dbReference type="InterPro" id="IPR009072">
    <property type="entry name" value="Histone-fold"/>
</dbReference>
<dbReference type="InterPro" id="IPR002119">
    <property type="entry name" value="Histone_H2A"/>
</dbReference>
<dbReference type="InterPro" id="IPR007125">
    <property type="entry name" value="Histone_H2A/H2B/H3"/>
</dbReference>
<dbReference type="InterPro" id="IPR032454">
    <property type="entry name" value="Histone_H2A_C"/>
</dbReference>
<dbReference type="InterPro" id="IPR032458">
    <property type="entry name" value="Histone_H2A_CS"/>
</dbReference>
<dbReference type="PANTHER" id="PTHR23430">
    <property type="entry name" value="HISTONE H2A"/>
    <property type="match status" value="1"/>
</dbReference>
<dbReference type="Pfam" id="PF00125">
    <property type="entry name" value="Histone"/>
    <property type="match status" value="1"/>
</dbReference>
<dbReference type="Pfam" id="PF16211">
    <property type="entry name" value="Histone_H2A_C"/>
    <property type="match status" value="1"/>
</dbReference>
<dbReference type="PRINTS" id="PR00620">
    <property type="entry name" value="HISTONEH2A"/>
</dbReference>
<dbReference type="SMART" id="SM00414">
    <property type="entry name" value="H2A"/>
    <property type="match status" value="1"/>
</dbReference>
<dbReference type="SUPFAM" id="SSF47113">
    <property type="entry name" value="Histone-fold"/>
    <property type="match status" value="1"/>
</dbReference>
<dbReference type="PROSITE" id="PS00046">
    <property type="entry name" value="HISTONE_H2A"/>
    <property type="match status" value="1"/>
</dbReference>
<organism>
    <name type="scientific">Rattus norvegicus</name>
    <name type="common">Rat</name>
    <dbReference type="NCBI Taxonomy" id="10116"/>
    <lineage>
        <taxon>Eukaryota</taxon>
        <taxon>Metazoa</taxon>
        <taxon>Chordata</taxon>
        <taxon>Craniata</taxon>
        <taxon>Vertebrata</taxon>
        <taxon>Euteleostomi</taxon>
        <taxon>Mammalia</taxon>
        <taxon>Eutheria</taxon>
        <taxon>Euarchontoglires</taxon>
        <taxon>Glires</taxon>
        <taxon>Rodentia</taxon>
        <taxon>Myomorpha</taxon>
        <taxon>Muroidea</taxon>
        <taxon>Muridae</taxon>
        <taxon>Murinae</taxon>
        <taxon>Rattus</taxon>
    </lineage>
</organism>